<accession>B4EU34</accession>
<name>THII_PROMH</name>
<reference key="1">
    <citation type="journal article" date="2008" name="J. Bacteriol.">
        <title>Complete genome sequence of uropathogenic Proteus mirabilis, a master of both adherence and motility.</title>
        <authorList>
            <person name="Pearson M.M."/>
            <person name="Sebaihia M."/>
            <person name="Churcher C."/>
            <person name="Quail M.A."/>
            <person name="Seshasayee A.S."/>
            <person name="Luscombe N.M."/>
            <person name="Abdellah Z."/>
            <person name="Arrosmith C."/>
            <person name="Atkin B."/>
            <person name="Chillingworth T."/>
            <person name="Hauser H."/>
            <person name="Jagels K."/>
            <person name="Moule S."/>
            <person name="Mungall K."/>
            <person name="Norbertczak H."/>
            <person name="Rabbinowitsch E."/>
            <person name="Walker D."/>
            <person name="Whithead S."/>
            <person name="Thomson N.R."/>
            <person name="Rather P.N."/>
            <person name="Parkhill J."/>
            <person name="Mobley H.L.T."/>
        </authorList>
    </citation>
    <scope>NUCLEOTIDE SEQUENCE [LARGE SCALE GENOMIC DNA]</scope>
    <source>
        <strain>HI4320</strain>
    </source>
</reference>
<proteinExistence type="inferred from homology"/>
<dbReference type="EC" id="2.8.1.4" evidence="1"/>
<dbReference type="EMBL" id="AM942759">
    <property type="protein sequence ID" value="CAR40360.1"/>
    <property type="molecule type" value="Genomic_DNA"/>
</dbReference>
<dbReference type="RefSeq" id="WP_004245118.1">
    <property type="nucleotide sequence ID" value="NC_010554.1"/>
</dbReference>
<dbReference type="SMR" id="B4EU34"/>
<dbReference type="EnsemblBacteria" id="CAR40360">
    <property type="protein sequence ID" value="CAR40360"/>
    <property type="gene ID" value="PMI0097"/>
</dbReference>
<dbReference type="GeneID" id="6800488"/>
<dbReference type="KEGG" id="pmr:PMI0097"/>
<dbReference type="eggNOG" id="COG0301">
    <property type="taxonomic scope" value="Bacteria"/>
</dbReference>
<dbReference type="eggNOG" id="COG0607">
    <property type="taxonomic scope" value="Bacteria"/>
</dbReference>
<dbReference type="HOGENOM" id="CLU_037952_4_1_6"/>
<dbReference type="UniPathway" id="UPA00060"/>
<dbReference type="Proteomes" id="UP000008319">
    <property type="component" value="Chromosome"/>
</dbReference>
<dbReference type="GO" id="GO:0005829">
    <property type="term" value="C:cytosol"/>
    <property type="evidence" value="ECO:0007669"/>
    <property type="project" value="TreeGrafter"/>
</dbReference>
<dbReference type="GO" id="GO:0005524">
    <property type="term" value="F:ATP binding"/>
    <property type="evidence" value="ECO:0007669"/>
    <property type="project" value="UniProtKB-UniRule"/>
</dbReference>
<dbReference type="GO" id="GO:0004810">
    <property type="term" value="F:CCA tRNA nucleotidyltransferase activity"/>
    <property type="evidence" value="ECO:0007669"/>
    <property type="project" value="InterPro"/>
</dbReference>
<dbReference type="GO" id="GO:0000049">
    <property type="term" value="F:tRNA binding"/>
    <property type="evidence" value="ECO:0007669"/>
    <property type="project" value="UniProtKB-UniRule"/>
</dbReference>
<dbReference type="GO" id="GO:0140741">
    <property type="term" value="F:tRNA-uracil-4 sulfurtransferase activity"/>
    <property type="evidence" value="ECO:0007669"/>
    <property type="project" value="UniProtKB-EC"/>
</dbReference>
<dbReference type="GO" id="GO:0009228">
    <property type="term" value="P:thiamine biosynthetic process"/>
    <property type="evidence" value="ECO:0007669"/>
    <property type="project" value="UniProtKB-KW"/>
</dbReference>
<dbReference type="GO" id="GO:0009229">
    <property type="term" value="P:thiamine diphosphate biosynthetic process"/>
    <property type="evidence" value="ECO:0007669"/>
    <property type="project" value="UniProtKB-UniRule"/>
</dbReference>
<dbReference type="GO" id="GO:0052837">
    <property type="term" value="P:thiazole biosynthetic process"/>
    <property type="evidence" value="ECO:0007669"/>
    <property type="project" value="InterPro"/>
</dbReference>
<dbReference type="GO" id="GO:0002937">
    <property type="term" value="P:tRNA 4-thiouridine biosynthesis"/>
    <property type="evidence" value="ECO:0007669"/>
    <property type="project" value="TreeGrafter"/>
</dbReference>
<dbReference type="CDD" id="cd01712">
    <property type="entry name" value="PPase_ThiI"/>
    <property type="match status" value="1"/>
</dbReference>
<dbReference type="CDD" id="cd00158">
    <property type="entry name" value="RHOD"/>
    <property type="match status" value="1"/>
</dbReference>
<dbReference type="CDD" id="cd11716">
    <property type="entry name" value="THUMP_ThiI"/>
    <property type="match status" value="1"/>
</dbReference>
<dbReference type="FunFam" id="3.30.2130.30:FF:000002">
    <property type="entry name" value="tRNA sulfurtransferase"/>
    <property type="match status" value="1"/>
</dbReference>
<dbReference type="FunFam" id="3.40.250.10:FF:000003">
    <property type="entry name" value="tRNA sulfurtransferase"/>
    <property type="match status" value="1"/>
</dbReference>
<dbReference type="FunFam" id="3.40.50.620:FF:000029">
    <property type="entry name" value="tRNA sulfurtransferase"/>
    <property type="match status" value="1"/>
</dbReference>
<dbReference type="Gene3D" id="3.30.2130.30">
    <property type="match status" value="1"/>
</dbReference>
<dbReference type="Gene3D" id="3.40.50.620">
    <property type="entry name" value="HUPs"/>
    <property type="match status" value="1"/>
</dbReference>
<dbReference type="Gene3D" id="3.40.250.10">
    <property type="entry name" value="Rhodanese-like domain"/>
    <property type="match status" value="1"/>
</dbReference>
<dbReference type="HAMAP" id="MF_00021">
    <property type="entry name" value="ThiI"/>
    <property type="match status" value="1"/>
</dbReference>
<dbReference type="InterPro" id="IPR001763">
    <property type="entry name" value="Rhodanese-like_dom"/>
</dbReference>
<dbReference type="InterPro" id="IPR036873">
    <property type="entry name" value="Rhodanese-like_dom_sf"/>
</dbReference>
<dbReference type="InterPro" id="IPR014729">
    <property type="entry name" value="Rossmann-like_a/b/a_fold"/>
</dbReference>
<dbReference type="InterPro" id="IPR020536">
    <property type="entry name" value="ThiI_AANH"/>
</dbReference>
<dbReference type="InterPro" id="IPR054173">
    <property type="entry name" value="ThiI_fer"/>
</dbReference>
<dbReference type="InterPro" id="IPR049961">
    <property type="entry name" value="ThiI_N"/>
</dbReference>
<dbReference type="InterPro" id="IPR026340">
    <property type="entry name" value="THII_Thiazole_biosynth_dom"/>
</dbReference>
<dbReference type="InterPro" id="IPR004114">
    <property type="entry name" value="THUMP_dom"/>
</dbReference>
<dbReference type="InterPro" id="IPR049962">
    <property type="entry name" value="THUMP_ThiI"/>
</dbReference>
<dbReference type="InterPro" id="IPR003720">
    <property type="entry name" value="tRNA_STrfase"/>
</dbReference>
<dbReference type="InterPro" id="IPR050102">
    <property type="entry name" value="tRNA_sulfurtransferase_ThiI"/>
</dbReference>
<dbReference type="NCBIfam" id="TIGR04271">
    <property type="entry name" value="ThiI_C_thiazole"/>
    <property type="match status" value="1"/>
</dbReference>
<dbReference type="NCBIfam" id="TIGR00342">
    <property type="entry name" value="tRNA uracil 4-sulfurtransferase ThiI"/>
    <property type="match status" value="1"/>
</dbReference>
<dbReference type="PANTHER" id="PTHR43209">
    <property type="entry name" value="TRNA SULFURTRANSFERASE"/>
    <property type="match status" value="1"/>
</dbReference>
<dbReference type="PANTHER" id="PTHR43209:SF1">
    <property type="entry name" value="TRNA SULFURTRANSFERASE"/>
    <property type="match status" value="1"/>
</dbReference>
<dbReference type="Pfam" id="PF00581">
    <property type="entry name" value="Rhodanese"/>
    <property type="match status" value="1"/>
</dbReference>
<dbReference type="Pfam" id="PF02568">
    <property type="entry name" value="ThiI"/>
    <property type="match status" value="1"/>
</dbReference>
<dbReference type="Pfam" id="PF22025">
    <property type="entry name" value="ThiI_fer"/>
    <property type="match status" value="1"/>
</dbReference>
<dbReference type="Pfam" id="PF02926">
    <property type="entry name" value="THUMP"/>
    <property type="match status" value="1"/>
</dbReference>
<dbReference type="SMART" id="SM00981">
    <property type="entry name" value="THUMP"/>
    <property type="match status" value="1"/>
</dbReference>
<dbReference type="SUPFAM" id="SSF52402">
    <property type="entry name" value="Adenine nucleotide alpha hydrolases-like"/>
    <property type="match status" value="1"/>
</dbReference>
<dbReference type="SUPFAM" id="SSF52821">
    <property type="entry name" value="Rhodanese/Cell cycle control phosphatase"/>
    <property type="match status" value="1"/>
</dbReference>
<dbReference type="SUPFAM" id="SSF143437">
    <property type="entry name" value="THUMP domain-like"/>
    <property type="match status" value="1"/>
</dbReference>
<dbReference type="PROSITE" id="PS50206">
    <property type="entry name" value="RHODANESE_3"/>
    <property type="match status" value="1"/>
</dbReference>
<dbReference type="PROSITE" id="PS51165">
    <property type="entry name" value="THUMP"/>
    <property type="match status" value="1"/>
</dbReference>
<organism>
    <name type="scientific">Proteus mirabilis (strain HI4320)</name>
    <dbReference type="NCBI Taxonomy" id="529507"/>
    <lineage>
        <taxon>Bacteria</taxon>
        <taxon>Pseudomonadati</taxon>
        <taxon>Pseudomonadota</taxon>
        <taxon>Gammaproteobacteria</taxon>
        <taxon>Enterobacterales</taxon>
        <taxon>Morganellaceae</taxon>
        <taxon>Proteus</taxon>
    </lineage>
</organism>
<protein>
    <recommendedName>
        <fullName evidence="1">tRNA sulfurtransferase</fullName>
        <ecNumber evidence="1">2.8.1.4</ecNumber>
    </recommendedName>
    <alternativeName>
        <fullName evidence="1">Sulfur carrier protein ThiS sulfurtransferase</fullName>
    </alternativeName>
    <alternativeName>
        <fullName evidence="1">Thiamine biosynthesis protein ThiI</fullName>
    </alternativeName>
    <alternativeName>
        <fullName evidence="1">tRNA 4-thiouridine synthase</fullName>
    </alternativeName>
</protein>
<evidence type="ECO:0000255" key="1">
    <source>
        <dbReference type="HAMAP-Rule" id="MF_00021"/>
    </source>
</evidence>
<sequence>MKFIIKLFPEITIKSQSVRIRFIKILTSNIRNVLSTLGDDITVVRHWDNIVVVSKDESKSEAVCDALTRIPGIHHFLQVEEHSYTDLHNIFEQTFAAFGHLVENKTFCVRAKRRGKHSFTSNEVERYVGGGFNQHVESAKVKLTRPDVTINLEIEDDKLILVNARYEGIGGFPIGTQEDVLSLISGGYDSGVSSYMLMRRGSRVHYCFFNLGGSAHEIGVKQVAHYLWNRFGRSHKVHFVAVDFEPVVAEILEKIDDGQMGVVLKRMMVRAASRVAERYGVQAIVTGEALGQVSSQTLTNLRLIDNATDTLILRPLITHDKENIINIARQIGTEDFARTMPEFCGVISKNPTVKAVKAKIEAEEEKFDFSILDSVVENAKNMDIRRIAEETVQQVTEVEMVSEFATNDVVLDIRSPEEQENSPLKLEGVDVKELPFYKLSTQFGDLDNSKTYLLYCERGMMSRLQALYLREQGFNNVKVYRKK</sequence>
<keyword id="KW-0067">ATP-binding</keyword>
<keyword id="KW-0963">Cytoplasm</keyword>
<keyword id="KW-1015">Disulfide bond</keyword>
<keyword id="KW-0547">Nucleotide-binding</keyword>
<keyword id="KW-0676">Redox-active center</keyword>
<keyword id="KW-1185">Reference proteome</keyword>
<keyword id="KW-0694">RNA-binding</keyword>
<keyword id="KW-0784">Thiamine biosynthesis</keyword>
<keyword id="KW-0808">Transferase</keyword>
<keyword id="KW-0820">tRNA-binding</keyword>
<feature type="chain" id="PRO_1000090026" description="tRNA sulfurtransferase">
    <location>
        <begin position="1"/>
        <end position="483"/>
    </location>
</feature>
<feature type="domain" description="THUMP" evidence="1">
    <location>
        <begin position="61"/>
        <end position="165"/>
    </location>
</feature>
<feature type="domain" description="Rhodanese" evidence="1">
    <location>
        <begin position="404"/>
        <end position="483"/>
    </location>
</feature>
<feature type="active site" description="Cysteine persulfide intermediate" evidence="1">
    <location>
        <position position="456"/>
    </location>
</feature>
<feature type="binding site" evidence="1">
    <location>
        <begin position="183"/>
        <end position="184"/>
    </location>
    <ligand>
        <name>ATP</name>
        <dbReference type="ChEBI" id="CHEBI:30616"/>
    </ligand>
</feature>
<feature type="binding site" evidence="1">
    <location>
        <position position="265"/>
    </location>
    <ligand>
        <name>ATP</name>
        <dbReference type="ChEBI" id="CHEBI:30616"/>
    </ligand>
</feature>
<feature type="binding site" evidence="1">
    <location>
        <position position="287"/>
    </location>
    <ligand>
        <name>ATP</name>
        <dbReference type="ChEBI" id="CHEBI:30616"/>
    </ligand>
</feature>
<feature type="binding site" evidence="1">
    <location>
        <position position="296"/>
    </location>
    <ligand>
        <name>ATP</name>
        <dbReference type="ChEBI" id="CHEBI:30616"/>
    </ligand>
</feature>
<feature type="disulfide bond" description="Redox-active" evidence="1">
    <location>
        <begin position="344"/>
        <end position="456"/>
    </location>
</feature>
<gene>
    <name evidence="1" type="primary">thiI</name>
    <name type="ordered locus">PMI0097</name>
</gene>
<comment type="function">
    <text evidence="1">Catalyzes the ATP-dependent transfer of a sulfur to tRNA to produce 4-thiouridine in position 8 of tRNAs, which functions as a near-UV photosensor. Also catalyzes the transfer of sulfur to the sulfur carrier protein ThiS, forming ThiS-thiocarboxylate. This is a step in the synthesis of thiazole, in the thiamine biosynthesis pathway. The sulfur is donated as persulfide by IscS.</text>
</comment>
<comment type="catalytic activity">
    <reaction evidence="1">
        <text>[ThiI sulfur-carrier protein]-S-sulfanyl-L-cysteine + a uridine in tRNA + 2 reduced [2Fe-2S]-[ferredoxin] + ATP + H(+) = [ThiI sulfur-carrier protein]-L-cysteine + a 4-thiouridine in tRNA + 2 oxidized [2Fe-2S]-[ferredoxin] + AMP + diphosphate</text>
        <dbReference type="Rhea" id="RHEA:24176"/>
        <dbReference type="Rhea" id="RHEA-COMP:10000"/>
        <dbReference type="Rhea" id="RHEA-COMP:10001"/>
        <dbReference type="Rhea" id="RHEA-COMP:13337"/>
        <dbReference type="Rhea" id="RHEA-COMP:13338"/>
        <dbReference type="Rhea" id="RHEA-COMP:13339"/>
        <dbReference type="Rhea" id="RHEA-COMP:13340"/>
        <dbReference type="ChEBI" id="CHEBI:15378"/>
        <dbReference type="ChEBI" id="CHEBI:29950"/>
        <dbReference type="ChEBI" id="CHEBI:30616"/>
        <dbReference type="ChEBI" id="CHEBI:33019"/>
        <dbReference type="ChEBI" id="CHEBI:33737"/>
        <dbReference type="ChEBI" id="CHEBI:33738"/>
        <dbReference type="ChEBI" id="CHEBI:61963"/>
        <dbReference type="ChEBI" id="CHEBI:65315"/>
        <dbReference type="ChEBI" id="CHEBI:136798"/>
        <dbReference type="ChEBI" id="CHEBI:456215"/>
        <dbReference type="EC" id="2.8.1.4"/>
    </reaction>
</comment>
<comment type="catalytic activity">
    <reaction evidence="1">
        <text>[ThiS sulfur-carrier protein]-C-terminal Gly-Gly-AMP + S-sulfanyl-L-cysteinyl-[cysteine desulfurase] + AH2 = [ThiS sulfur-carrier protein]-C-terminal-Gly-aminoethanethioate + L-cysteinyl-[cysteine desulfurase] + A + AMP + 2 H(+)</text>
        <dbReference type="Rhea" id="RHEA:43340"/>
        <dbReference type="Rhea" id="RHEA-COMP:12157"/>
        <dbReference type="Rhea" id="RHEA-COMP:12158"/>
        <dbReference type="Rhea" id="RHEA-COMP:12910"/>
        <dbReference type="Rhea" id="RHEA-COMP:19908"/>
        <dbReference type="ChEBI" id="CHEBI:13193"/>
        <dbReference type="ChEBI" id="CHEBI:15378"/>
        <dbReference type="ChEBI" id="CHEBI:17499"/>
        <dbReference type="ChEBI" id="CHEBI:29950"/>
        <dbReference type="ChEBI" id="CHEBI:61963"/>
        <dbReference type="ChEBI" id="CHEBI:90618"/>
        <dbReference type="ChEBI" id="CHEBI:232372"/>
        <dbReference type="ChEBI" id="CHEBI:456215"/>
    </reaction>
</comment>
<comment type="pathway">
    <text evidence="1">Cofactor biosynthesis; thiamine diphosphate biosynthesis.</text>
</comment>
<comment type="subcellular location">
    <subcellularLocation>
        <location evidence="1">Cytoplasm</location>
    </subcellularLocation>
</comment>
<comment type="similarity">
    <text evidence="1">Belongs to the ThiI family.</text>
</comment>